<feature type="chain" id="PRO_0000313213" description="DNA ligase">
    <location>
        <begin position="1"/>
        <end position="677"/>
    </location>
</feature>
<feature type="domain" description="BRCT" evidence="1">
    <location>
        <begin position="598"/>
        <end position="677"/>
    </location>
</feature>
<feature type="active site" description="N6-AMP-lysine intermediate" evidence="1">
    <location>
        <position position="114"/>
    </location>
</feature>
<feature type="binding site" evidence="1">
    <location>
        <begin position="32"/>
        <end position="36"/>
    </location>
    <ligand>
        <name>NAD(+)</name>
        <dbReference type="ChEBI" id="CHEBI:57540"/>
    </ligand>
</feature>
<feature type="binding site" evidence="1">
    <location>
        <begin position="81"/>
        <end position="82"/>
    </location>
    <ligand>
        <name>NAD(+)</name>
        <dbReference type="ChEBI" id="CHEBI:57540"/>
    </ligand>
</feature>
<feature type="binding site" evidence="1">
    <location>
        <position position="112"/>
    </location>
    <ligand>
        <name>NAD(+)</name>
        <dbReference type="ChEBI" id="CHEBI:57540"/>
    </ligand>
</feature>
<feature type="binding site" evidence="1">
    <location>
        <position position="135"/>
    </location>
    <ligand>
        <name>NAD(+)</name>
        <dbReference type="ChEBI" id="CHEBI:57540"/>
    </ligand>
</feature>
<feature type="binding site" evidence="1">
    <location>
        <position position="171"/>
    </location>
    <ligand>
        <name>NAD(+)</name>
        <dbReference type="ChEBI" id="CHEBI:57540"/>
    </ligand>
</feature>
<feature type="binding site" evidence="1">
    <location>
        <position position="288"/>
    </location>
    <ligand>
        <name>NAD(+)</name>
        <dbReference type="ChEBI" id="CHEBI:57540"/>
    </ligand>
</feature>
<feature type="binding site" evidence="1">
    <location>
        <position position="312"/>
    </location>
    <ligand>
        <name>NAD(+)</name>
        <dbReference type="ChEBI" id="CHEBI:57540"/>
    </ligand>
</feature>
<feature type="binding site" evidence="1">
    <location>
        <position position="416"/>
    </location>
    <ligand>
        <name>Zn(2+)</name>
        <dbReference type="ChEBI" id="CHEBI:29105"/>
    </ligand>
</feature>
<feature type="binding site" evidence="1">
    <location>
        <position position="419"/>
    </location>
    <ligand>
        <name>Zn(2+)</name>
        <dbReference type="ChEBI" id="CHEBI:29105"/>
    </ligand>
</feature>
<feature type="binding site" evidence="1">
    <location>
        <position position="434"/>
    </location>
    <ligand>
        <name>Zn(2+)</name>
        <dbReference type="ChEBI" id="CHEBI:29105"/>
    </ligand>
</feature>
<feature type="binding site" evidence="1">
    <location>
        <position position="439"/>
    </location>
    <ligand>
        <name>Zn(2+)</name>
        <dbReference type="ChEBI" id="CHEBI:29105"/>
    </ligand>
</feature>
<proteinExistence type="inferred from homology"/>
<dbReference type="EC" id="6.5.1.2" evidence="1"/>
<dbReference type="EMBL" id="AJ965256">
    <property type="protein sequence ID" value="CAI82759.1"/>
    <property type="molecule type" value="Genomic_DNA"/>
</dbReference>
<dbReference type="RefSeq" id="WP_011309110.1">
    <property type="nucleotide sequence ID" value="NC_007356.1"/>
</dbReference>
<dbReference type="SMR" id="Q3ZX08"/>
<dbReference type="KEGG" id="deh:cbdbA577"/>
<dbReference type="HOGENOM" id="CLU_007764_2_1_0"/>
<dbReference type="Proteomes" id="UP000000433">
    <property type="component" value="Chromosome"/>
</dbReference>
<dbReference type="GO" id="GO:0005829">
    <property type="term" value="C:cytosol"/>
    <property type="evidence" value="ECO:0007669"/>
    <property type="project" value="TreeGrafter"/>
</dbReference>
<dbReference type="GO" id="GO:0003677">
    <property type="term" value="F:DNA binding"/>
    <property type="evidence" value="ECO:0007669"/>
    <property type="project" value="InterPro"/>
</dbReference>
<dbReference type="GO" id="GO:0003911">
    <property type="term" value="F:DNA ligase (NAD+) activity"/>
    <property type="evidence" value="ECO:0007669"/>
    <property type="project" value="UniProtKB-UniRule"/>
</dbReference>
<dbReference type="GO" id="GO:0046872">
    <property type="term" value="F:metal ion binding"/>
    <property type="evidence" value="ECO:0007669"/>
    <property type="project" value="UniProtKB-KW"/>
</dbReference>
<dbReference type="GO" id="GO:0006281">
    <property type="term" value="P:DNA repair"/>
    <property type="evidence" value="ECO:0007669"/>
    <property type="project" value="UniProtKB-KW"/>
</dbReference>
<dbReference type="GO" id="GO:0006260">
    <property type="term" value="P:DNA replication"/>
    <property type="evidence" value="ECO:0007669"/>
    <property type="project" value="UniProtKB-KW"/>
</dbReference>
<dbReference type="CDD" id="cd17748">
    <property type="entry name" value="BRCT_DNA_ligase_like"/>
    <property type="match status" value="1"/>
</dbReference>
<dbReference type="CDD" id="cd00114">
    <property type="entry name" value="LIGANc"/>
    <property type="match status" value="1"/>
</dbReference>
<dbReference type="FunFam" id="1.10.150.20:FF:000006">
    <property type="entry name" value="DNA ligase"/>
    <property type="match status" value="1"/>
</dbReference>
<dbReference type="FunFam" id="1.10.150.20:FF:000007">
    <property type="entry name" value="DNA ligase"/>
    <property type="match status" value="1"/>
</dbReference>
<dbReference type="FunFam" id="1.10.287.610:FF:000002">
    <property type="entry name" value="DNA ligase"/>
    <property type="match status" value="1"/>
</dbReference>
<dbReference type="FunFam" id="3.30.470.30:FF:000001">
    <property type="entry name" value="DNA ligase"/>
    <property type="match status" value="1"/>
</dbReference>
<dbReference type="Gene3D" id="6.20.10.30">
    <property type="match status" value="1"/>
</dbReference>
<dbReference type="Gene3D" id="1.10.150.20">
    <property type="entry name" value="5' to 3' exonuclease, C-terminal subdomain"/>
    <property type="match status" value="2"/>
</dbReference>
<dbReference type="Gene3D" id="3.40.50.10190">
    <property type="entry name" value="BRCT domain"/>
    <property type="match status" value="1"/>
</dbReference>
<dbReference type="Gene3D" id="3.30.470.30">
    <property type="entry name" value="DNA ligase/mRNA capping enzyme"/>
    <property type="match status" value="1"/>
</dbReference>
<dbReference type="Gene3D" id="1.10.287.610">
    <property type="entry name" value="Helix hairpin bin"/>
    <property type="match status" value="1"/>
</dbReference>
<dbReference type="Gene3D" id="2.40.50.140">
    <property type="entry name" value="Nucleic acid-binding proteins"/>
    <property type="match status" value="1"/>
</dbReference>
<dbReference type="HAMAP" id="MF_01588">
    <property type="entry name" value="DNA_ligase_A"/>
    <property type="match status" value="1"/>
</dbReference>
<dbReference type="InterPro" id="IPR001357">
    <property type="entry name" value="BRCT_dom"/>
</dbReference>
<dbReference type="InterPro" id="IPR036420">
    <property type="entry name" value="BRCT_dom_sf"/>
</dbReference>
<dbReference type="InterPro" id="IPR041663">
    <property type="entry name" value="DisA/LigA_HHH"/>
</dbReference>
<dbReference type="InterPro" id="IPR001679">
    <property type="entry name" value="DNA_ligase"/>
</dbReference>
<dbReference type="InterPro" id="IPR018239">
    <property type="entry name" value="DNA_ligase_AS"/>
</dbReference>
<dbReference type="InterPro" id="IPR033136">
    <property type="entry name" value="DNA_ligase_CS"/>
</dbReference>
<dbReference type="InterPro" id="IPR013839">
    <property type="entry name" value="DNAligase_adenylation"/>
</dbReference>
<dbReference type="InterPro" id="IPR013840">
    <property type="entry name" value="DNAligase_N"/>
</dbReference>
<dbReference type="InterPro" id="IPR003583">
    <property type="entry name" value="Hlx-hairpin-Hlx_DNA-bd_motif"/>
</dbReference>
<dbReference type="InterPro" id="IPR012340">
    <property type="entry name" value="NA-bd_OB-fold"/>
</dbReference>
<dbReference type="InterPro" id="IPR004150">
    <property type="entry name" value="NAD_DNA_ligase_OB"/>
</dbReference>
<dbReference type="InterPro" id="IPR010994">
    <property type="entry name" value="RuvA_2-like"/>
</dbReference>
<dbReference type="InterPro" id="IPR004149">
    <property type="entry name" value="Znf_DNAligase_C4"/>
</dbReference>
<dbReference type="NCBIfam" id="TIGR00575">
    <property type="entry name" value="dnlj"/>
    <property type="match status" value="1"/>
</dbReference>
<dbReference type="NCBIfam" id="NF005932">
    <property type="entry name" value="PRK07956.1"/>
    <property type="match status" value="1"/>
</dbReference>
<dbReference type="PANTHER" id="PTHR23389">
    <property type="entry name" value="CHROMOSOME TRANSMISSION FIDELITY FACTOR 18"/>
    <property type="match status" value="1"/>
</dbReference>
<dbReference type="PANTHER" id="PTHR23389:SF9">
    <property type="entry name" value="DNA LIGASE"/>
    <property type="match status" value="1"/>
</dbReference>
<dbReference type="Pfam" id="PF00533">
    <property type="entry name" value="BRCT"/>
    <property type="match status" value="1"/>
</dbReference>
<dbReference type="Pfam" id="PF01653">
    <property type="entry name" value="DNA_ligase_aden"/>
    <property type="match status" value="1"/>
</dbReference>
<dbReference type="Pfam" id="PF03120">
    <property type="entry name" value="DNA_ligase_OB"/>
    <property type="match status" value="1"/>
</dbReference>
<dbReference type="Pfam" id="PF03119">
    <property type="entry name" value="DNA_ligase_ZBD"/>
    <property type="match status" value="1"/>
</dbReference>
<dbReference type="Pfam" id="PF12826">
    <property type="entry name" value="HHH_2"/>
    <property type="match status" value="1"/>
</dbReference>
<dbReference type="Pfam" id="PF14520">
    <property type="entry name" value="HHH_5"/>
    <property type="match status" value="1"/>
</dbReference>
<dbReference type="Pfam" id="PF22745">
    <property type="entry name" value="Nlig-Ia"/>
    <property type="match status" value="1"/>
</dbReference>
<dbReference type="PIRSF" id="PIRSF001604">
    <property type="entry name" value="LigA"/>
    <property type="match status" value="1"/>
</dbReference>
<dbReference type="SMART" id="SM00292">
    <property type="entry name" value="BRCT"/>
    <property type="match status" value="1"/>
</dbReference>
<dbReference type="SMART" id="SM00278">
    <property type="entry name" value="HhH1"/>
    <property type="match status" value="2"/>
</dbReference>
<dbReference type="SMART" id="SM00532">
    <property type="entry name" value="LIGANc"/>
    <property type="match status" value="1"/>
</dbReference>
<dbReference type="SUPFAM" id="SSF52113">
    <property type="entry name" value="BRCT domain"/>
    <property type="match status" value="1"/>
</dbReference>
<dbReference type="SUPFAM" id="SSF56091">
    <property type="entry name" value="DNA ligase/mRNA capping enzyme, catalytic domain"/>
    <property type="match status" value="1"/>
</dbReference>
<dbReference type="SUPFAM" id="SSF50249">
    <property type="entry name" value="Nucleic acid-binding proteins"/>
    <property type="match status" value="1"/>
</dbReference>
<dbReference type="SUPFAM" id="SSF47781">
    <property type="entry name" value="RuvA domain 2-like"/>
    <property type="match status" value="1"/>
</dbReference>
<dbReference type="PROSITE" id="PS50172">
    <property type="entry name" value="BRCT"/>
    <property type="match status" value="1"/>
</dbReference>
<dbReference type="PROSITE" id="PS01055">
    <property type="entry name" value="DNA_LIGASE_N1"/>
    <property type="match status" value="1"/>
</dbReference>
<dbReference type="PROSITE" id="PS01056">
    <property type="entry name" value="DNA_LIGASE_N2"/>
    <property type="match status" value="1"/>
</dbReference>
<gene>
    <name evidence="1" type="primary">ligA</name>
    <name type="ordered locus">cbdbA577</name>
</gene>
<protein>
    <recommendedName>
        <fullName evidence="1">DNA ligase</fullName>
        <ecNumber evidence="1">6.5.1.2</ecNumber>
    </recommendedName>
    <alternativeName>
        <fullName evidence="1">Polydeoxyribonucleotide synthase [NAD(+)]</fullName>
    </alternativeName>
</protein>
<keyword id="KW-0227">DNA damage</keyword>
<keyword id="KW-0234">DNA repair</keyword>
<keyword id="KW-0235">DNA replication</keyword>
<keyword id="KW-0436">Ligase</keyword>
<keyword id="KW-0460">Magnesium</keyword>
<keyword id="KW-0464">Manganese</keyword>
<keyword id="KW-0479">Metal-binding</keyword>
<keyword id="KW-0520">NAD</keyword>
<keyword id="KW-0862">Zinc</keyword>
<organism>
    <name type="scientific">Dehalococcoides mccartyi (strain CBDB1)</name>
    <dbReference type="NCBI Taxonomy" id="255470"/>
    <lineage>
        <taxon>Bacteria</taxon>
        <taxon>Bacillati</taxon>
        <taxon>Chloroflexota</taxon>
        <taxon>Dehalococcoidia</taxon>
        <taxon>Dehalococcoidales</taxon>
        <taxon>Dehalococcoidaceae</taxon>
        <taxon>Dehalococcoides</taxon>
    </lineage>
</organism>
<reference key="1">
    <citation type="journal article" date="2005" name="Nat. Biotechnol.">
        <title>Genome sequence of the chlorinated compound-respiring bacterium Dehalococcoides species strain CBDB1.</title>
        <authorList>
            <person name="Kube M."/>
            <person name="Beck A."/>
            <person name="Zinder S.H."/>
            <person name="Kuhl H."/>
            <person name="Reinhardt R."/>
            <person name="Adrian L."/>
        </authorList>
    </citation>
    <scope>NUCLEOTIDE SEQUENCE [LARGE SCALE GENOMIC DNA]</scope>
    <source>
        <strain>CBDB1</strain>
    </source>
</reference>
<comment type="function">
    <text evidence="1">DNA ligase that catalyzes the formation of phosphodiester linkages between 5'-phosphoryl and 3'-hydroxyl groups in double-stranded DNA using NAD as a coenzyme and as the energy source for the reaction. It is essential for DNA replication and repair of damaged DNA.</text>
</comment>
<comment type="catalytic activity">
    <reaction evidence="1">
        <text>NAD(+) + (deoxyribonucleotide)n-3'-hydroxyl + 5'-phospho-(deoxyribonucleotide)m = (deoxyribonucleotide)n+m + AMP + beta-nicotinamide D-nucleotide.</text>
        <dbReference type="EC" id="6.5.1.2"/>
    </reaction>
</comment>
<comment type="cofactor">
    <cofactor evidence="1">
        <name>Mg(2+)</name>
        <dbReference type="ChEBI" id="CHEBI:18420"/>
    </cofactor>
    <cofactor evidence="1">
        <name>Mn(2+)</name>
        <dbReference type="ChEBI" id="CHEBI:29035"/>
    </cofactor>
</comment>
<comment type="similarity">
    <text evidence="1">Belongs to the NAD-dependent DNA ligase family. LigA subfamily.</text>
</comment>
<sequence>MFSPLIEVENLRREINRHNQLYYVQDNPEISDAQYDTLIRRLKELEEAHPELVTPDSPTQKVGAEPLKAFGIVNHPYPLLSLANAFSDTELEAWYQRVKKLLGNISFQIDCEPKMDGLAVALTYRNGKFATGATRGDGFQGENITRNLRTIHSIPLNAEPNAPPVFEVRGEVYLSKNGFAKLNRERADKGLPLFANPRNAAAGSLRQLDPSVTAERPLDIFIYALGYSEDSLLPDSHWQILDYFSKIGFRINPLNRLVNTMEEAKEYYRQMAANRASLPYEADGVVFKVDSVSLQHRLGDVGREPRWAIAYKFPAEQVMTRLKKIGISVGRTGTLNPFAVLEPVNVGGVVVKQAALHNEDDILRKDIREGDTVIIQRAGEVIPEVVAPVLSKRNPESKPFRMEESLFNPNLNRPACPVCGGEIYRPAGEAMHYCTNVSCPAQFERQLEHFVSRGAMDIRGIGESLSVILAQQGLVKNVSDLYYLTTADLLQLPRMGEKSADNIIDAIADSKTRPLDRVIFGLGVRHVGNETATLLSRHYGNIWALAKTGLGELQTIPDIGDKIASSIVAYFSEEKNVAVIRRLEEAGVRLTSDQKPVNKNMPFSGMEFVVTGKLESFSREEAQEKIRSLGGTAKDNVTKATSYLVVGADAGSKLAKARSMGVKELSEREFINMLEQS</sequence>
<accession>Q3ZX08</accession>
<evidence type="ECO:0000255" key="1">
    <source>
        <dbReference type="HAMAP-Rule" id="MF_01588"/>
    </source>
</evidence>
<name>DNLJ_DEHMC</name>